<reference key="1">
    <citation type="journal article" date="2001" name="J. Cell. Biochem.">
        <title>Molecular cloning and characterization of a RING-H2 finger protein, ANAPC11, the human homolog of yeast Apc11p.</title>
        <authorList>
            <person name="Chan A.H."/>
            <person name="Lee S.M.Y."/>
            <person name="Chim S.S."/>
            <person name="Kok L.D."/>
            <person name="Waye M.M.Y."/>
            <person name="Lee C.Y."/>
            <person name="Fung K.P."/>
            <person name="Tsui S.K.W."/>
        </authorList>
    </citation>
    <scope>NUCLEOTIDE SEQUENCE [MRNA] (ISOFORM 1)</scope>
    <scope>TISSUE SPECIFICITY</scope>
    <scope>SUBCELLULAR LOCATION</scope>
</reference>
<reference key="2">
    <citation type="submission" date="2000-03" db="EMBL/GenBank/DDBJ databases">
        <title>Novel human APC11 anaphase-promoting complex subunit.</title>
        <authorList>
            <person name="Li N."/>
            <person name="Wan T."/>
            <person name="Zhang W."/>
            <person name="Cao X."/>
        </authorList>
    </citation>
    <scope>NUCLEOTIDE SEQUENCE [MRNA] (ISOFORM 1)</scope>
</reference>
<reference key="3">
    <citation type="journal article" date="2000" name="Genome Res.">
        <title>Cloning and functional analysis of cDNAs with open reading frames for 300 previously undefined genes expressed in CD34+ hematopoietic stem/progenitor cells.</title>
        <authorList>
            <person name="Zhang Q.-H."/>
            <person name="Ye M."/>
            <person name="Wu X.-Y."/>
            <person name="Ren S.-X."/>
            <person name="Zhao M."/>
            <person name="Zhao C.-J."/>
            <person name="Fu G."/>
            <person name="Shen Y."/>
            <person name="Fan H.-Y."/>
            <person name="Lu G."/>
            <person name="Zhong M."/>
            <person name="Xu X.-R."/>
            <person name="Han Z.-G."/>
            <person name="Zhang J.-W."/>
            <person name="Tao J."/>
            <person name="Huang Q.-H."/>
            <person name="Zhou J."/>
            <person name="Hu G.-X."/>
            <person name="Gu J."/>
            <person name="Chen S.-J."/>
            <person name="Chen Z."/>
        </authorList>
    </citation>
    <scope>NUCLEOTIDE SEQUENCE [LARGE SCALE MRNA] (ISOFORM 1)</scope>
    <source>
        <tissue>Umbilical cord blood</tissue>
    </source>
</reference>
<reference key="4">
    <citation type="journal article" date="2006" name="Nature">
        <title>DNA sequence of human chromosome 17 and analysis of rearrangement in the human lineage.</title>
        <authorList>
            <person name="Zody M.C."/>
            <person name="Garber M."/>
            <person name="Adams D.J."/>
            <person name="Sharpe T."/>
            <person name="Harrow J."/>
            <person name="Lupski J.R."/>
            <person name="Nicholson C."/>
            <person name="Searle S.M."/>
            <person name="Wilming L."/>
            <person name="Young S.K."/>
            <person name="Abouelleil A."/>
            <person name="Allen N.R."/>
            <person name="Bi W."/>
            <person name="Bloom T."/>
            <person name="Borowsky M.L."/>
            <person name="Bugalter B.E."/>
            <person name="Butler J."/>
            <person name="Chang J.L."/>
            <person name="Chen C.-K."/>
            <person name="Cook A."/>
            <person name="Corum B."/>
            <person name="Cuomo C.A."/>
            <person name="de Jong P.J."/>
            <person name="DeCaprio D."/>
            <person name="Dewar K."/>
            <person name="FitzGerald M."/>
            <person name="Gilbert J."/>
            <person name="Gibson R."/>
            <person name="Gnerre S."/>
            <person name="Goldstein S."/>
            <person name="Grafham D.V."/>
            <person name="Grocock R."/>
            <person name="Hafez N."/>
            <person name="Hagopian D.S."/>
            <person name="Hart E."/>
            <person name="Norman C.H."/>
            <person name="Humphray S."/>
            <person name="Jaffe D.B."/>
            <person name="Jones M."/>
            <person name="Kamal M."/>
            <person name="Khodiyar V.K."/>
            <person name="LaButti K."/>
            <person name="Laird G."/>
            <person name="Lehoczky J."/>
            <person name="Liu X."/>
            <person name="Lokyitsang T."/>
            <person name="Loveland J."/>
            <person name="Lui A."/>
            <person name="Macdonald P."/>
            <person name="Major J.E."/>
            <person name="Matthews L."/>
            <person name="Mauceli E."/>
            <person name="McCarroll S.A."/>
            <person name="Mihalev A.H."/>
            <person name="Mudge J."/>
            <person name="Nguyen C."/>
            <person name="Nicol R."/>
            <person name="O'Leary S.B."/>
            <person name="Osoegawa K."/>
            <person name="Schwartz D.C."/>
            <person name="Shaw-Smith C."/>
            <person name="Stankiewicz P."/>
            <person name="Steward C."/>
            <person name="Swarbreck D."/>
            <person name="Venkataraman V."/>
            <person name="Whittaker C.A."/>
            <person name="Yang X."/>
            <person name="Zimmer A.R."/>
            <person name="Bradley A."/>
            <person name="Hubbard T."/>
            <person name="Birren B.W."/>
            <person name="Rogers J."/>
            <person name="Lander E.S."/>
            <person name="Nusbaum C."/>
        </authorList>
    </citation>
    <scope>NUCLEOTIDE SEQUENCE [LARGE SCALE GENOMIC DNA]</scope>
</reference>
<reference key="5">
    <citation type="journal article" date="2004" name="Genome Res.">
        <title>The status, quality, and expansion of the NIH full-length cDNA project: the Mammalian Gene Collection (MGC).</title>
        <authorList>
            <consortium name="The MGC Project Team"/>
        </authorList>
    </citation>
    <scope>NUCLEOTIDE SEQUENCE [LARGE SCALE MRNA] (ISOFORMS 1 AND 2)</scope>
    <source>
        <tissue>Brain</tissue>
        <tissue>Skin</tissue>
        <tissue>Testis</tissue>
    </source>
</reference>
<reference key="6">
    <citation type="journal article" date="2000" name="Proc. Natl. Acad. Sci. U.S.A.">
        <title>The RING-H2 finger protein APC11 and the E2 enzyme UBC4 are sufficient to ubiquitinate substrates of the anaphase-promoting complex.</title>
        <authorList>
            <person name="Gmachl M."/>
            <person name="Gieffers C."/>
            <person name="Podtelejnikov A.V."/>
            <person name="Mann M."/>
            <person name="Peters J.-M."/>
        </authorList>
    </citation>
    <scope>IDENTIFICATION IN APC/C COMPLEX</scope>
</reference>
<reference key="7">
    <citation type="journal article" date="2001" name="Mol. Biol. Cell">
        <title>APC2 cullin protein and APC11 RING protein comprise the minimal ubiquitin ligase module of the anaphase-promoting complex.</title>
        <authorList>
            <person name="Tang Z."/>
            <person name="Li B."/>
            <person name="Bharadwaj R."/>
            <person name="Zhu H."/>
            <person name="Oezkan E."/>
            <person name="Hakala K."/>
            <person name="Deisenhofer J."/>
            <person name="Yu H."/>
        </authorList>
    </citation>
    <scope>FUNCTION</scope>
    <scope>MUTAGENESIS</scope>
    <scope>INTERACTION WITH ANAPC2 AND UBE2D2</scope>
</reference>
<reference key="8">
    <citation type="journal article" date="2008" name="Cell">
        <title>Mechanism of ubiquitin-chain formation by the human anaphase-promoting complex.</title>
        <authorList>
            <person name="Jin L."/>
            <person name="Williamson A."/>
            <person name="Banerjee S."/>
            <person name="Philipp I."/>
            <person name="Rape M."/>
        </authorList>
    </citation>
    <scope>FUNCTION OF THE APC/C</scope>
</reference>
<reference key="9">
    <citation type="journal article" date="2005" name="Mol. Cell">
        <title>Localization of the coactivator Cdh1 and the cullin subunit Apc2 in a cryo-electron microscopy model of vertebrate APC/C.</title>
        <authorList>
            <person name="Dube P."/>
            <person name="Herzog F."/>
            <person name="Gieffers C."/>
            <person name="Sander B."/>
            <person name="Riedel D."/>
            <person name="Mueller S.A."/>
            <person name="Engel A."/>
            <person name="Peters J.-M."/>
            <person name="Stark H."/>
        </authorList>
    </citation>
    <scope>ELECTRON MICROSCOPY OF THE APC/C</scope>
</reference>
<reference key="10">
    <citation type="journal article" date="2017" name="Cell">
        <title>Assembly and function of heterotypic ubiquitin chains in cell-cycle and protein quality control.</title>
        <authorList>
            <person name="Yau R.G."/>
            <person name="Doerner K."/>
            <person name="Castellanos E.R."/>
            <person name="Haakonsen D.L."/>
            <person name="Werner A."/>
            <person name="Wang N."/>
            <person name="Yang X.W."/>
            <person name="Martinez-Martin N."/>
            <person name="Matsumoto M.L."/>
            <person name="Dixit V.M."/>
            <person name="Rape M."/>
        </authorList>
    </citation>
    <scope>FUNCTION</scope>
    <scope>PATHWAY</scope>
</reference>
<reference key="11">
    <citation type="journal article" date="2014" name="Nature">
        <title>Molecular architecture and mechanism of the anaphase-promoting complex.</title>
        <authorList>
            <person name="Chang L."/>
            <person name="Zhang Z."/>
            <person name="Yang J."/>
            <person name="McLaughlin S.H."/>
            <person name="Barford D."/>
        </authorList>
    </citation>
    <scope>STRUCTURE BY ELECTRON MICROSCOPY (7.4 ANGSTROMS) OF THE APC/C</scope>
    <scope>SUBUNIT</scope>
</reference>
<reference evidence="12 13" key="12">
    <citation type="journal article" date="2015" name="Nature">
        <title>Atomic structure of the APC/C and its mechanism of protein ubiquitination.</title>
        <authorList>
            <person name="Chang L."/>
            <person name="Zhang Z."/>
            <person name="Yang J."/>
            <person name="McLaughlin S.H."/>
            <person name="Barford D."/>
        </authorList>
    </citation>
    <scope>STRUCTURE BY ELECTRON MICROSCOPY (3.60 ANGSTROMS) OF APC/C</scope>
    <scope>SUBUNIT</scope>
</reference>
<sequence>MKVKIKCWNGVATWLWVANDENCGICRMAFNGCCPDCKVPGDDCPLVWGQCSHCFHMHCILKWLHAQQVQQHCPMCRQEWKFKE</sequence>
<feature type="chain" id="PRO_0000055747" description="Anaphase-promoting complex subunit 11">
    <location>
        <begin position="1"/>
        <end position="84"/>
    </location>
</feature>
<feature type="zinc finger region" description="RING-type" evidence="2">
    <location>
        <begin position="34"/>
        <end position="77"/>
    </location>
</feature>
<feature type="binding site" evidence="1">
    <location>
        <position position="23"/>
    </location>
    <ligand>
        <name>Zn(2+)</name>
        <dbReference type="ChEBI" id="CHEBI:29105"/>
        <label>1</label>
    </ligand>
</feature>
<feature type="binding site" evidence="1">
    <location>
        <position position="26"/>
    </location>
    <ligand>
        <name>Zn(2+)</name>
        <dbReference type="ChEBI" id="CHEBI:29105"/>
        <label>1</label>
    </ligand>
</feature>
<feature type="binding site" evidence="1">
    <location>
        <position position="34"/>
    </location>
    <ligand>
        <name>Zn(2+)</name>
        <dbReference type="ChEBI" id="CHEBI:29105"/>
        <label>3</label>
    </ligand>
</feature>
<feature type="binding site" evidence="1">
    <location>
        <position position="37"/>
    </location>
    <ligand>
        <name>Zn(2+)</name>
        <dbReference type="ChEBI" id="CHEBI:29105"/>
        <label>3</label>
    </ligand>
</feature>
<feature type="binding site" evidence="1">
    <location>
        <position position="44"/>
    </location>
    <ligand>
        <name>Zn(2+)</name>
        <dbReference type="ChEBI" id="CHEBI:29105"/>
        <label>3</label>
    </ligand>
</feature>
<feature type="binding site" evidence="1">
    <location>
        <position position="51"/>
    </location>
    <ligand>
        <name>Zn(2+)</name>
        <dbReference type="ChEBI" id="CHEBI:29105"/>
        <label>2</label>
    </ligand>
</feature>
<feature type="binding site" evidence="1">
    <location>
        <position position="53"/>
    </location>
    <ligand>
        <name>Zn(2+)</name>
        <dbReference type="ChEBI" id="CHEBI:29105"/>
        <label>2</label>
    </ligand>
</feature>
<feature type="binding site" evidence="1">
    <location>
        <position position="56"/>
    </location>
    <ligand>
        <name>Zn(2+)</name>
        <dbReference type="ChEBI" id="CHEBI:29105"/>
        <label>1</label>
    </ligand>
</feature>
<feature type="binding site" evidence="1">
    <location>
        <position position="58"/>
    </location>
    <ligand>
        <name>Zn(2+)</name>
        <dbReference type="ChEBI" id="CHEBI:29105"/>
        <label>3</label>
    </ligand>
</feature>
<feature type="binding site" evidence="1">
    <location>
        <position position="59"/>
    </location>
    <ligand>
        <name>Zn(2+)</name>
        <dbReference type="ChEBI" id="CHEBI:29105"/>
        <label>1</label>
    </ligand>
</feature>
<feature type="binding site" evidence="1">
    <location>
        <position position="73"/>
    </location>
    <ligand>
        <name>Zn(2+)</name>
        <dbReference type="ChEBI" id="CHEBI:29105"/>
        <label>2</label>
    </ligand>
</feature>
<feature type="binding site" evidence="1">
    <location>
        <position position="76"/>
    </location>
    <ligand>
        <name>Zn(2+)</name>
        <dbReference type="ChEBI" id="CHEBI:29105"/>
        <label>2</label>
    </ligand>
</feature>
<feature type="splice variant" id="VSP_012347" description="In isoform 2." evidence="10">
    <original>KVPGDDCPLVWGQCSHCFHMHCILKWLHAQQVQQHCPMCRQEWKFKE</original>
    <variation>PLHGESISRCLGWCPQPVPVLGGRAHPQVPINTASPTPGQHTGSLMSREESSRSPDPTPPALDQETSSLLRCTSPWCLDHSCDLFGITDQVSADGPRACRQGARRRLPAGVGPVLPLLPHALHPQVAARTAGAAALPHVPPGMEVQGVRPDLALAGGAS</variation>
    <location>
        <begin position="38"/>
        <end position="84"/>
    </location>
</feature>
<feature type="mutagenesis site" description="Greatly reduces autoubiquitination activity; in isoform 1." evidence="5">
    <original>C</original>
    <variation>S</variation>
    <location>
        <position position="23"/>
    </location>
</feature>
<feature type="mutagenesis site" description="Greatly reduces autoubiquitination activity; in isoform 1." evidence="5">
    <original>C</original>
    <variation>S</variation>
    <location>
        <position position="26"/>
    </location>
</feature>
<feature type="mutagenesis site" description="Slightly reduces autoubiquitination activity; in isoform 1." evidence="5">
    <original>C</original>
    <variation>S</variation>
    <location>
        <position position="34"/>
    </location>
</feature>
<feature type="mutagenesis site" description="Slightly reduces autoubiquitination activity; in isoform 1." evidence="5">
    <original>C</original>
    <variation>S</variation>
    <location>
        <position position="37"/>
    </location>
</feature>
<feature type="mutagenesis site" description="Slightly reduces autoubiquitination activity; in isoform 1." evidence="5">
    <original>C</original>
    <variation>S</variation>
    <location>
        <position position="44"/>
    </location>
</feature>
<feature type="mutagenesis site" description="Greatly reduces autoubiquitination activity; in isoform 1." evidence="5">
    <original>C</original>
    <variation>S</variation>
    <location>
        <position position="51"/>
    </location>
</feature>
<feature type="mutagenesis site" description="Greatly reduces autoubiquitination activity; in isoform 1." evidence="5">
    <original>H</original>
    <variation>S</variation>
    <location>
        <position position="53"/>
    </location>
</feature>
<feature type="mutagenesis site" description="Greatly reduces autoubiquitination activity; in isoform 1." evidence="5">
    <original>H</original>
    <variation>S</variation>
    <location>
        <position position="56"/>
    </location>
</feature>
<feature type="mutagenesis site" description="Slightly reduces autoubiquitination activity; in isoform 1." evidence="5">
    <original>H</original>
    <variation>S</variation>
    <location>
        <position position="58"/>
    </location>
</feature>
<feature type="mutagenesis site" description="Greatly reduces autoubiquitination activity; in isoform 1." evidence="5">
    <original>C</original>
    <variation>S</variation>
    <location>
        <position position="59"/>
    </location>
</feature>
<feature type="mutagenesis site" description="Greatly reduces autoubiquitination activity; in isoform 1." evidence="5">
    <original>C</original>
    <variation>S</variation>
    <location>
        <position position="73"/>
    </location>
</feature>
<feature type="mutagenesis site" description="Greatly reduces autoubiquitination activity; in isoform 1." evidence="5">
    <original>C</original>
    <variation>S</variation>
    <location>
        <position position="76"/>
    </location>
</feature>
<feature type="strand" evidence="16">
    <location>
        <begin position="3"/>
        <end position="9"/>
    </location>
</feature>
<feature type="strand" evidence="19">
    <location>
        <begin position="12"/>
        <end position="14"/>
    </location>
</feature>
<feature type="strand" evidence="18">
    <location>
        <begin position="19"/>
        <end position="22"/>
    </location>
</feature>
<feature type="turn" evidence="15">
    <location>
        <begin position="24"/>
        <end position="26"/>
    </location>
</feature>
<feature type="strand" evidence="18">
    <location>
        <begin position="29"/>
        <end position="32"/>
    </location>
</feature>
<feature type="helix" evidence="15">
    <location>
        <begin position="35"/>
        <end position="37"/>
    </location>
</feature>
<feature type="turn" evidence="15">
    <location>
        <begin position="38"/>
        <end position="41"/>
    </location>
</feature>
<feature type="strand" evidence="15">
    <location>
        <begin position="46"/>
        <end position="49"/>
    </location>
</feature>
<feature type="strand" evidence="14">
    <location>
        <begin position="50"/>
        <end position="52"/>
    </location>
</feature>
<feature type="strand" evidence="15">
    <location>
        <begin position="54"/>
        <end position="56"/>
    </location>
</feature>
<feature type="helix" evidence="15">
    <location>
        <begin position="57"/>
        <end position="67"/>
    </location>
</feature>
<feature type="strand" evidence="17">
    <location>
        <begin position="68"/>
        <end position="70"/>
    </location>
</feature>
<feature type="strand" evidence="15">
    <location>
        <begin position="76"/>
        <end position="79"/>
    </location>
</feature>
<name>APC11_HUMAN</name>
<gene>
    <name type="primary">ANAPC11</name>
    <name type="ORF">HSPC214</name>
</gene>
<comment type="function">
    <text evidence="5 6 9">Together with the cullin protein ANAPC2, constitutes the catalytic component of the anaphase promoting complex/cyclosome (APC/C), a cell cycle-regulated E3 ubiquitin ligase that controls progression through mitosis and the G1 phase of the cell cycle (PubMed:11739784, PubMed:18485873). The APC/C complex acts by mediating ubiquitination and subsequent degradation of target proteins: it mainly mediates the formation of 'Lys-11'-linked polyubiquitin chains and, to a lower extent, the formation of 'Lys-48'- and 'Lys-63'-linked polyubiquitin chains (PubMed:11739784, PubMed:18485873). The APC/C complex catalyzes assembly of branched 'Lys-11'-/'Lys-48'-linked branched ubiquitin chains on target proteins (PubMed:29033132). May recruit the E2 ubiquitin-conjugating enzymes to the complex (PubMed:11739784, PubMed:18485873).</text>
</comment>
<comment type="pathway">
    <text evidence="6 9">Protein modification; protein ubiquitination.</text>
</comment>
<comment type="subunit">
    <text evidence="3 5 7 8">The mammalian APC/C is composed at least of 14 distinct subunits ANAPC1, ANAPC2, CDC27/APC3, ANAPC4, ANAPC5, CDC16/APC6, ANAPC7, CDC23/APC8, ANAPC10, ANAPC11, CDC26/APC12, ANAPC13, ANAPC15 and ANAPC16 that assemble into a complex of at least 19 chains with a combined molecular mass of around 1.2 MDa; APC/C interacts with FZR1 and FBXO5 (PubMed:10922056, PubMed:25043029, PubMed:26083744). Interacts with the cullin domain of ANAPC2 (PubMed:11739784). Interacts with UBE2D2 (PubMed:11739784).</text>
</comment>
<comment type="interaction">
    <interactant intactId="EBI-2130187">
        <id>Q9NYG5</id>
    </interactant>
    <interactant intactId="EBI-747754">
        <id>P28799</id>
        <label>GRN</label>
    </interactant>
    <organismsDiffer>false</organismsDiffer>
    <experiments>3</experiments>
</comment>
<comment type="interaction">
    <interactant intactId="EBI-2130187">
        <id>Q9NYG5</id>
    </interactant>
    <interactant intactId="EBI-988601">
        <id>O43933</id>
        <label>PEX1</label>
    </interactant>
    <organismsDiffer>false</organismsDiffer>
    <experiments>3</experiments>
</comment>
<comment type="interaction">
    <interactant intactId="EBI-12224467">
        <id>Q9NYG5-2</id>
    </interactant>
    <interactant intactId="EBI-11524452">
        <id>Q8N9N5-2</id>
        <label>BANP</label>
    </interactant>
    <organismsDiffer>false</organismsDiffer>
    <experiments>3</experiments>
</comment>
<comment type="interaction">
    <interactant intactId="EBI-12224467">
        <id>Q9NYG5-2</id>
    </interactant>
    <interactant intactId="EBI-954079">
        <id>Q8NDZ0</id>
        <label>BEND2</label>
    </interactant>
    <organismsDiffer>false</organismsDiffer>
    <experiments>3</experiments>
</comment>
<comment type="interaction">
    <interactant intactId="EBI-12224467">
        <id>Q9NYG5-2</id>
    </interactant>
    <interactant intactId="EBI-10192698">
        <id>Q02930-3</id>
        <label>CREB5</label>
    </interactant>
    <organismsDiffer>false</organismsDiffer>
    <experiments>3</experiments>
</comment>
<comment type="interaction">
    <interactant intactId="EBI-12224467">
        <id>Q9NYG5-2</id>
    </interactant>
    <interactant intactId="EBI-750444">
        <id>P53672</id>
        <label>CRYBA2</label>
    </interactant>
    <organismsDiffer>false</organismsDiffer>
    <experiments>3</experiments>
</comment>
<comment type="interaction">
    <interactant intactId="EBI-12224467">
        <id>Q9NYG5-2</id>
    </interactant>
    <interactant intactId="EBI-3867333">
        <id>A8MQ03</id>
        <label>CYSRT1</label>
    </interactant>
    <organismsDiffer>false</organismsDiffer>
    <experiments>3</experiments>
</comment>
<comment type="interaction">
    <interactant intactId="EBI-12224467">
        <id>Q9NYG5-2</id>
    </interactant>
    <interactant intactId="EBI-740376">
        <id>Q86UW9</id>
        <label>DTX2</label>
    </interactant>
    <organismsDiffer>false</organismsDiffer>
    <experiments>3</experiments>
</comment>
<comment type="interaction">
    <interactant intactId="EBI-12224467">
        <id>Q9NYG5-2</id>
    </interactant>
    <interactant intactId="EBI-536772">
        <id>Q12805</id>
        <label>EFEMP1</label>
    </interactant>
    <organismsDiffer>false</organismsDiffer>
    <experiments>3</experiments>
</comment>
<comment type="interaction">
    <interactant intactId="EBI-12224467">
        <id>Q9NYG5-2</id>
    </interactant>
    <interactant intactId="EBI-743414">
        <id>O95967</id>
        <label>EFEMP2</label>
    </interactant>
    <organismsDiffer>false</organismsDiffer>
    <experiments>3</experiments>
</comment>
<comment type="interaction">
    <interactant intactId="EBI-12224467">
        <id>Q9NYG5-2</id>
    </interactant>
    <interactant intactId="EBI-725515">
        <id>O43559</id>
        <label>FRS3</label>
    </interactant>
    <organismsDiffer>false</organismsDiffer>
    <experiments>3</experiments>
</comment>
<comment type="interaction">
    <interactant intactId="EBI-12224467">
        <id>Q9NYG5-2</id>
    </interactant>
    <interactant intactId="EBI-751540">
        <id>O95872</id>
        <label>GPANK1</label>
    </interactant>
    <organismsDiffer>false</organismsDiffer>
    <experiments>3</experiments>
</comment>
<comment type="interaction">
    <interactant intactId="EBI-12224467">
        <id>Q9NYG5-2</id>
    </interactant>
    <interactant intactId="EBI-3918847">
        <id>Q9H2F3</id>
        <label>HSD3B7</label>
    </interactant>
    <organismsDiffer>false</organismsDiffer>
    <experiments>3</experiments>
</comment>
<comment type="interaction">
    <interactant intactId="EBI-12224467">
        <id>Q9NYG5-2</id>
    </interactant>
    <interactant intactId="EBI-10220600">
        <id>Q8NA54</id>
        <label>IQUB</label>
    </interactant>
    <organismsDiffer>false</organismsDiffer>
    <experiments>3</experiments>
</comment>
<comment type="interaction">
    <interactant intactId="EBI-12224467">
        <id>Q9NYG5-2</id>
    </interactant>
    <interactant intactId="EBI-1052037">
        <id>Q8IUC1</id>
        <label>KRTAP11-1</label>
    </interactant>
    <organismsDiffer>false</organismsDiffer>
    <experiments>3</experiments>
</comment>
<comment type="interaction">
    <interactant intactId="EBI-12224467">
        <id>Q9NYG5-2</id>
    </interactant>
    <interactant intactId="EBI-11953846">
        <id>Q52LG2</id>
        <label>KRTAP13-2</label>
    </interactant>
    <organismsDiffer>false</organismsDiffer>
    <experiments>3</experiments>
</comment>
<comment type="interaction">
    <interactant intactId="EBI-12224467">
        <id>Q9NYG5-2</id>
    </interactant>
    <interactant intactId="EBI-12196745">
        <id>Q3LHN2</id>
        <label>KRTAP19-2</label>
    </interactant>
    <organismsDiffer>false</organismsDiffer>
    <experiments>3</experiments>
</comment>
<comment type="interaction">
    <interactant intactId="EBI-12224467">
        <id>Q9NYG5-2</id>
    </interactant>
    <interactant intactId="EBI-9996449">
        <id>Q9BYR8</id>
        <label>KRTAP3-1</label>
    </interactant>
    <organismsDiffer>false</organismsDiffer>
    <experiments>3</experiments>
</comment>
<comment type="interaction">
    <interactant intactId="EBI-12224467">
        <id>Q9NYG5-2</id>
    </interactant>
    <interactant intactId="EBI-3957694">
        <id>Q9BYR6</id>
        <label>KRTAP3-3</label>
    </interactant>
    <organismsDiffer>false</organismsDiffer>
    <experiments>3</experiments>
</comment>
<comment type="interaction">
    <interactant intactId="EBI-12224467">
        <id>Q9NYG5-2</id>
    </interactant>
    <interactant intactId="EBI-12111050">
        <id>Q3LI64</id>
        <label>KRTAP6-1</label>
    </interactant>
    <organismsDiffer>false</organismsDiffer>
    <experiments>3</experiments>
</comment>
<comment type="interaction">
    <interactant intactId="EBI-12224467">
        <id>Q9NYG5-2</id>
    </interactant>
    <interactant intactId="EBI-11962084">
        <id>Q3LI66</id>
        <label>KRTAP6-2</label>
    </interactant>
    <organismsDiffer>false</organismsDiffer>
    <experiments>3</experiments>
</comment>
<comment type="interaction">
    <interactant intactId="EBI-12224467">
        <id>Q9NYG5-2</id>
    </interactant>
    <interactant intactId="EBI-12813389">
        <id>Q8TDS5</id>
        <label>OXER1</label>
    </interactant>
    <organismsDiffer>false</organismsDiffer>
    <experiments>3</experiments>
</comment>
<comment type="interaction">
    <interactant intactId="EBI-12224467">
        <id>Q9NYG5-2</id>
    </interactant>
    <interactant intactId="EBI-10181968">
        <id>Q7Z4N8</id>
        <label>P4HA3</label>
    </interactant>
    <organismsDiffer>false</organismsDiffer>
    <experiments>3</experiments>
</comment>
<comment type="interaction">
    <interactant intactId="EBI-12224467">
        <id>Q9NYG5-2</id>
    </interactant>
    <interactant intactId="EBI-1383852">
        <id>P54646</id>
        <label>PRKAA2</label>
    </interactant>
    <organismsDiffer>false</organismsDiffer>
    <experiments>3</experiments>
</comment>
<comment type="interaction">
    <interactant intactId="EBI-12224467">
        <id>Q9NYG5-2</id>
    </interactant>
    <interactant intactId="EBI-1053424">
        <id>O43741</id>
        <label>PRKAB2</label>
    </interactant>
    <organismsDiffer>false</organismsDiffer>
    <experiments>3</experiments>
</comment>
<comment type="interaction">
    <interactant intactId="EBI-12224467">
        <id>Q9NYG5-2</id>
    </interactant>
    <interactant intactId="EBI-740343">
        <id>Q93062-3</id>
        <label>RBPMS</label>
    </interactant>
    <organismsDiffer>false</organismsDiffer>
    <experiments>3</experiments>
</comment>
<comment type="interaction">
    <interactant intactId="EBI-12224467">
        <id>Q9NYG5-2</id>
    </interactant>
    <interactant intactId="EBI-743976">
        <id>Q96LM6</id>
        <label>SPMIP9</label>
    </interactant>
    <organismsDiffer>false</organismsDiffer>
    <experiments>3</experiments>
</comment>
<comment type="interaction">
    <interactant intactId="EBI-12224467">
        <id>Q9NYG5-2</id>
    </interactant>
    <interactant intactId="EBI-11955057">
        <id>Q8N8B7-2</id>
        <label>TCEANC</label>
    </interactant>
    <organismsDiffer>false</organismsDiffer>
    <experiments>3</experiments>
</comment>
<comment type="interaction">
    <interactant intactId="EBI-12224467">
        <id>Q9NYG5-2</id>
    </interactant>
    <interactant intactId="EBI-11741437">
        <id>Q08117-2</id>
        <label>TLE5</label>
    </interactant>
    <organismsDiffer>false</organismsDiffer>
    <experiments>3</experiments>
</comment>
<comment type="interaction">
    <interactant intactId="EBI-12224467">
        <id>Q9NYG5-2</id>
    </interactant>
    <interactant intactId="EBI-12040603">
        <id>Q9NZC7-5</id>
        <label>WWOX</label>
    </interactant>
    <organismsDiffer>false</organismsDiffer>
    <experiments>3</experiments>
</comment>
<comment type="subcellular location">
    <subcellularLocation>
        <location evidence="4">Cytoplasm</location>
    </subcellularLocation>
    <subcellularLocation>
        <location evidence="4">Nucleus</location>
    </subcellularLocation>
</comment>
<comment type="alternative products">
    <event type="alternative splicing"/>
    <isoform>
        <id>Q9NYG5-1</id>
        <name>1</name>
        <sequence type="displayed"/>
    </isoform>
    <isoform>
        <id>Q9NYG5-2</id>
        <name>2</name>
        <sequence type="described" ref="VSP_012347"/>
    </isoform>
</comment>
<comment type="tissue specificity">
    <text evidence="4">Expressed at high levels in skeletal muscle and heart; in moderate levels in brain, kidney, and liver; and at low levels in colon, thymus, spleen, small intestine, placenta, lung and peripheral blood leukocyte.</text>
</comment>
<comment type="domain">
    <text>The RING-type zinc finger domain coordinates an additional third zinc ion.</text>
</comment>
<comment type="PTM">
    <text>Auto-ubiquitinated.</text>
</comment>
<comment type="similarity">
    <text evidence="11">Belongs to the RING-box family.</text>
</comment>
<comment type="sequence caution" evidence="11">
    <conflict type="frameshift">
        <sequence resource="EMBL-CDS" id="AAF36134"/>
    </conflict>
</comment>
<accession>Q9NYG5</accession>
<accession>A8MTT2</accession>
<accession>B7ZW64</accession>
<accession>Q502X9</accession>
<accession>Q9BW64</accession>
<accession>Q9P0R2</accession>
<keyword id="KW-0002">3D-structure</keyword>
<keyword id="KW-0025">Alternative splicing</keyword>
<keyword id="KW-0131">Cell cycle</keyword>
<keyword id="KW-0132">Cell division</keyword>
<keyword id="KW-0963">Cytoplasm</keyword>
<keyword id="KW-0479">Metal-binding</keyword>
<keyword id="KW-0498">Mitosis</keyword>
<keyword id="KW-0539">Nucleus</keyword>
<keyword id="KW-1267">Proteomics identification</keyword>
<keyword id="KW-1185">Reference proteome</keyword>
<keyword id="KW-0832">Ubl conjugation</keyword>
<keyword id="KW-0833">Ubl conjugation pathway</keyword>
<keyword id="KW-0862">Zinc</keyword>
<keyword id="KW-0863">Zinc-finger</keyword>
<protein>
    <recommendedName>
        <fullName>Anaphase-promoting complex subunit 11</fullName>
        <shortName>APC11</shortName>
    </recommendedName>
    <alternativeName>
        <fullName>Cyclosome subunit 11</fullName>
    </alternativeName>
    <alternativeName>
        <fullName>Hepatocellular carcinoma-associated RING finger protein</fullName>
    </alternativeName>
</protein>
<dbReference type="EMBL" id="AF247565">
    <property type="protein sequence ID" value="AAF65816.1"/>
    <property type="molecule type" value="mRNA"/>
</dbReference>
<dbReference type="EMBL" id="AF247789">
    <property type="protein sequence ID" value="AAL95694.1"/>
    <property type="molecule type" value="mRNA"/>
</dbReference>
<dbReference type="EMBL" id="AF151048">
    <property type="protein sequence ID" value="AAF36134.1"/>
    <property type="status" value="ALT_FRAME"/>
    <property type="molecule type" value="mRNA"/>
</dbReference>
<dbReference type="EMBL" id="AC145207">
    <property type="status" value="NOT_ANNOTATED_CDS"/>
    <property type="molecule type" value="Genomic_DNA"/>
</dbReference>
<dbReference type="EMBL" id="BC000607">
    <property type="protein sequence ID" value="AAH00607.2"/>
    <property type="molecule type" value="mRNA"/>
</dbReference>
<dbReference type="EMBL" id="BC066308">
    <property type="protein sequence ID" value="AAH66308.1"/>
    <property type="molecule type" value="mRNA"/>
</dbReference>
<dbReference type="EMBL" id="BC095454">
    <property type="protein sequence ID" value="AAH95454.1"/>
    <property type="molecule type" value="mRNA"/>
</dbReference>
<dbReference type="EMBL" id="BC104641">
    <property type="protein sequence ID" value="AAI04642.1"/>
    <property type="molecule type" value="mRNA"/>
</dbReference>
<dbReference type="EMBL" id="BC171892">
    <property type="protein sequence ID" value="AAI71892.1"/>
    <property type="molecule type" value="mRNA"/>
</dbReference>
<dbReference type="EMBL" id="BC171898">
    <property type="protein sequence ID" value="AAI71898.1"/>
    <property type="molecule type" value="mRNA"/>
</dbReference>
<dbReference type="EMBL" id="BC171899">
    <property type="protein sequence ID" value="AAI71899.1"/>
    <property type="molecule type" value="mRNA"/>
</dbReference>
<dbReference type="EMBL" id="BC171900">
    <property type="protein sequence ID" value="AAI71900.1"/>
    <property type="molecule type" value="mRNA"/>
</dbReference>
<dbReference type="CCDS" id="CCDS11789.1">
    <molecule id="Q9NYG5-1"/>
</dbReference>
<dbReference type="CCDS" id="CCDS32769.1">
    <molecule id="Q9NYG5-2"/>
</dbReference>
<dbReference type="RefSeq" id="NP_001002244.1">
    <molecule id="Q9NYG5-2"/>
    <property type="nucleotide sequence ID" value="NM_001002244.2"/>
</dbReference>
<dbReference type="RefSeq" id="NP_001002245.1">
    <molecule id="Q9NYG5-1"/>
    <property type="nucleotide sequence ID" value="NM_001002245.2"/>
</dbReference>
<dbReference type="RefSeq" id="NP_001002246.1">
    <molecule id="Q9NYG5-1"/>
    <property type="nucleotide sequence ID" value="NM_001002246.2"/>
</dbReference>
<dbReference type="RefSeq" id="NP_001002247.1">
    <molecule id="Q9NYG5-1"/>
    <property type="nucleotide sequence ID" value="NM_001002247.2"/>
</dbReference>
<dbReference type="RefSeq" id="NP_001002248.1">
    <molecule id="Q9NYG5-1"/>
    <property type="nucleotide sequence ID" value="NM_001002248.3"/>
</dbReference>
<dbReference type="RefSeq" id="NP_001002249.1">
    <molecule id="Q9NYG5-1"/>
    <property type="nucleotide sequence ID" value="NM_001002249.2"/>
</dbReference>
<dbReference type="RefSeq" id="NP_001276343.1">
    <molecule id="Q9NYG5-1"/>
    <property type="nucleotide sequence ID" value="NM_001289414.1"/>
</dbReference>
<dbReference type="RefSeq" id="NP_001276344.1">
    <molecule id="Q9NYG5-1"/>
    <property type="nucleotide sequence ID" value="NM_001289415.1"/>
</dbReference>
<dbReference type="RefSeq" id="NP_001276345.1">
    <molecule id="Q9NYG5-1"/>
    <property type="nucleotide sequence ID" value="NM_001289416.1"/>
</dbReference>
<dbReference type="RefSeq" id="NP_001276346.1">
    <molecule id="Q9NYG5-1"/>
    <property type="nucleotide sequence ID" value="NM_001289417.1"/>
</dbReference>
<dbReference type="RefSeq" id="NP_001276349.1">
    <property type="nucleotide sequence ID" value="NM_001289420.1"/>
</dbReference>
<dbReference type="RefSeq" id="NP_057560.8">
    <molecule id="Q9NYG5-1"/>
    <property type="nucleotide sequence ID" value="NM_016476.11"/>
</dbReference>
<dbReference type="PDB" id="2MT5">
    <property type="method" value="NMR"/>
    <property type="chains" value="A=17-84"/>
</dbReference>
<dbReference type="PDB" id="4R2Y">
    <property type="method" value="X-ray"/>
    <property type="resolution" value="1.76 A"/>
    <property type="chains" value="A/B/C/D=17-84"/>
</dbReference>
<dbReference type="PDB" id="4UI9">
    <property type="method" value="EM"/>
    <property type="resolution" value="3.60 A"/>
    <property type="chains" value="B=1-84"/>
</dbReference>
<dbReference type="PDB" id="5A31">
    <property type="method" value="EM"/>
    <property type="resolution" value="4.30 A"/>
    <property type="chains" value="B=1-84"/>
</dbReference>
<dbReference type="PDB" id="5G04">
    <property type="method" value="EM"/>
    <property type="resolution" value="4.00 A"/>
    <property type="chains" value="B=1-84"/>
</dbReference>
<dbReference type="PDB" id="5G05">
    <property type="method" value="EM"/>
    <property type="resolution" value="3.40 A"/>
    <property type="chains" value="B=1-84"/>
</dbReference>
<dbReference type="PDB" id="5JG6">
    <property type="method" value="X-ray"/>
    <property type="resolution" value="2.00 A"/>
    <property type="chains" value="A/D=17-84"/>
</dbReference>
<dbReference type="PDB" id="5KHR">
    <property type="method" value="EM"/>
    <property type="resolution" value="6.10 A"/>
    <property type="chains" value="B=1-84"/>
</dbReference>
<dbReference type="PDB" id="5KHU">
    <property type="method" value="EM"/>
    <property type="resolution" value="4.80 A"/>
    <property type="chains" value="B=1-84"/>
</dbReference>
<dbReference type="PDB" id="5L9T">
    <property type="method" value="EM"/>
    <property type="resolution" value="6.40 A"/>
    <property type="chains" value="B=1-84"/>
</dbReference>
<dbReference type="PDB" id="5L9U">
    <property type="method" value="EM"/>
    <property type="resolution" value="6.40 A"/>
    <property type="chains" value="B=1-84"/>
</dbReference>
<dbReference type="PDB" id="5LCW">
    <property type="method" value="EM"/>
    <property type="resolution" value="4.00 A"/>
    <property type="chains" value="B=1-84"/>
</dbReference>
<dbReference type="PDB" id="6Q6G">
    <property type="method" value="EM"/>
    <property type="resolution" value="3.20 A"/>
    <property type="chains" value="C=1-84"/>
</dbReference>
<dbReference type="PDB" id="6Q6H">
    <property type="method" value="EM"/>
    <property type="resolution" value="3.20 A"/>
    <property type="chains" value="C=1-84"/>
</dbReference>
<dbReference type="PDB" id="6TLJ">
    <property type="method" value="EM"/>
    <property type="resolution" value="3.80 A"/>
    <property type="chains" value="B=1-84"/>
</dbReference>
<dbReference type="PDB" id="6TM5">
    <property type="method" value="EM"/>
    <property type="resolution" value="3.90 A"/>
    <property type="chains" value="B=1-84"/>
</dbReference>
<dbReference type="PDB" id="6TNT">
    <property type="method" value="EM"/>
    <property type="resolution" value="3.78 A"/>
    <property type="chains" value="B=1-84"/>
</dbReference>
<dbReference type="PDB" id="8PKP">
    <property type="method" value="EM"/>
    <property type="resolution" value="3.20 A"/>
    <property type="chains" value="C=1-84"/>
</dbReference>
<dbReference type="PDB" id="8TAR">
    <property type="method" value="EM"/>
    <property type="resolution" value="4.00 A"/>
    <property type="chains" value="C=1-84"/>
</dbReference>
<dbReference type="PDB" id="8TAU">
    <property type="method" value="EM"/>
    <property type="resolution" value="3.50 A"/>
    <property type="chains" value="C=1-84"/>
</dbReference>
<dbReference type="PDB" id="9GAW">
    <property type="method" value="EM"/>
    <property type="resolution" value="2.90 A"/>
    <property type="chains" value="C=1-84"/>
</dbReference>
<dbReference type="PDBsum" id="2MT5"/>
<dbReference type="PDBsum" id="4R2Y"/>
<dbReference type="PDBsum" id="4UI9"/>
<dbReference type="PDBsum" id="5A31"/>
<dbReference type="PDBsum" id="5G04"/>
<dbReference type="PDBsum" id="5G05"/>
<dbReference type="PDBsum" id="5JG6"/>
<dbReference type="PDBsum" id="5KHR"/>
<dbReference type="PDBsum" id="5KHU"/>
<dbReference type="PDBsum" id="5L9T"/>
<dbReference type="PDBsum" id="5L9U"/>
<dbReference type="PDBsum" id="5LCW"/>
<dbReference type="PDBsum" id="6Q6G"/>
<dbReference type="PDBsum" id="6Q6H"/>
<dbReference type="PDBsum" id="6TLJ"/>
<dbReference type="PDBsum" id="6TM5"/>
<dbReference type="PDBsum" id="6TNT"/>
<dbReference type="PDBsum" id="8PKP"/>
<dbReference type="PDBsum" id="8TAR"/>
<dbReference type="PDBsum" id="8TAU"/>
<dbReference type="PDBsum" id="9GAW"/>
<dbReference type="BMRB" id="Q9NYG5"/>
<dbReference type="EMDB" id="EMD-10516"/>
<dbReference type="EMDB" id="EMD-10518"/>
<dbReference type="EMDB" id="EMD-10536"/>
<dbReference type="EMDB" id="EMD-13931"/>
<dbReference type="EMDB" id="EMD-17751"/>
<dbReference type="EMDB" id="EMD-19711"/>
<dbReference type="EMDB" id="EMD-2924"/>
<dbReference type="EMDB" id="EMD-2925"/>
<dbReference type="EMDB" id="EMD-3385"/>
<dbReference type="EMDB" id="EMD-3386"/>
<dbReference type="EMDB" id="EMD-3387"/>
<dbReference type="EMDB" id="EMD-3388"/>
<dbReference type="EMDB" id="EMD-3389"/>
<dbReference type="EMDB" id="EMD-3390"/>
<dbReference type="EMDB" id="EMD-4037"/>
<dbReference type="EMDB" id="EMD-41140"/>
<dbReference type="EMDB" id="EMD-41142"/>
<dbReference type="EMDB" id="EMD-4465"/>
<dbReference type="EMDB" id="EMD-4466"/>
<dbReference type="EMDB" id="EMD-4467"/>
<dbReference type="EMDB" id="EMD-51190"/>
<dbReference type="SMR" id="Q9NYG5"/>
<dbReference type="BioGRID" id="119591">
    <property type="interactions" value="85"/>
</dbReference>
<dbReference type="ComplexPortal" id="CPX-1860">
    <property type="entry name" value="Anaphase-promoting core complex"/>
</dbReference>
<dbReference type="CORUM" id="Q9NYG5"/>
<dbReference type="DIP" id="DIP-52741N"/>
<dbReference type="FunCoup" id="Q9NYG5">
    <property type="interactions" value="2103"/>
</dbReference>
<dbReference type="IntAct" id="Q9NYG5">
    <property type="interactions" value="50"/>
</dbReference>
<dbReference type="STRING" id="9606.ENSP00000349957"/>
<dbReference type="iPTMnet" id="Q9NYG5"/>
<dbReference type="PhosphoSitePlus" id="Q9NYG5"/>
<dbReference type="BioMuta" id="ANAPC11"/>
<dbReference type="DMDM" id="19924286"/>
<dbReference type="jPOST" id="Q9NYG5"/>
<dbReference type="MassIVE" id="Q9NYG5"/>
<dbReference type="PeptideAtlas" id="Q9NYG5"/>
<dbReference type="ProteomicsDB" id="83227">
    <molecule id="Q9NYG5-1"/>
</dbReference>
<dbReference type="ProteomicsDB" id="83228">
    <molecule id="Q9NYG5-2"/>
</dbReference>
<dbReference type="Pumba" id="Q9NYG5"/>
<dbReference type="Antibodypedia" id="19841">
    <property type="antibodies" value="392 antibodies from 36 providers"/>
</dbReference>
<dbReference type="DNASU" id="51529"/>
<dbReference type="Ensembl" id="ENST00000344877.10">
    <molecule id="Q9NYG5-1"/>
    <property type="protein sequence ID" value="ENSP00000339695.5"/>
    <property type="gene ID" value="ENSG00000141552.18"/>
</dbReference>
<dbReference type="Ensembl" id="ENST00000357385.7">
    <molecule id="Q9NYG5-2"/>
    <property type="protein sequence ID" value="ENSP00000349957.3"/>
    <property type="gene ID" value="ENSG00000141552.18"/>
</dbReference>
<dbReference type="Ensembl" id="ENST00000392376.7">
    <molecule id="Q9NYG5-1"/>
    <property type="protein sequence ID" value="ENSP00000376181.3"/>
    <property type="gene ID" value="ENSG00000141552.18"/>
</dbReference>
<dbReference type="Ensembl" id="ENST00000571024.6">
    <molecule id="Q9NYG5-1"/>
    <property type="protein sequence ID" value="ENSP00000461648.2"/>
    <property type="gene ID" value="ENSG00000141552.18"/>
</dbReference>
<dbReference type="Ensembl" id="ENST00000571570.5">
    <molecule id="Q9NYG5-1"/>
    <property type="protein sequence ID" value="ENSP00000458143.1"/>
    <property type="gene ID" value="ENSG00000141552.18"/>
</dbReference>
<dbReference type="Ensembl" id="ENST00000571874.6">
    <molecule id="Q9NYG5-1"/>
    <property type="protein sequence ID" value="ENSP00000459200.2"/>
    <property type="gene ID" value="ENSG00000141552.18"/>
</dbReference>
<dbReference type="Ensembl" id="ENST00000572639.5">
    <molecule id="Q9NYG5-1"/>
    <property type="protein sequence ID" value="ENSP00000460678.1"/>
    <property type="gene ID" value="ENSG00000141552.18"/>
</dbReference>
<dbReference type="Ensembl" id="ENST00000572851.6">
    <molecule id="Q9NYG5-1"/>
    <property type="protein sequence ID" value="ENSP00000458265.2"/>
    <property type="gene ID" value="ENSG00000141552.18"/>
</dbReference>
<dbReference type="Ensembl" id="ENST00000574924.6">
    <molecule id="Q9NYG5-1"/>
    <property type="protein sequence ID" value="ENSP00000460064.2"/>
    <property type="gene ID" value="ENSG00000141552.18"/>
</dbReference>
<dbReference type="Ensembl" id="ENST00000575195.2">
    <molecule id="Q9NYG5-1"/>
    <property type="protein sequence ID" value="ENSP00000458515.2"/>
    <property type="gene ID" value="ENSG00000141552.18"/>
</dbReference>
<dbReference type="Ensembl" id="ENST00000577747.5">
    <molecule id="Q9NYG5-1"/>
    <property type="protein sequence ID" value="ENSP00000463567.1"/>
    <property type="gene ID" value="ENSG00000141552.18"/>
</dbReference>
<dbReference type="Ensembl" id="ENST00000578550.5">
    <molecule id="Q9NYG5-1"/>
    <property type="protein sequence ID" value="ENSP00000464615.1"/>
    <property type="gene ID" value="ENSG00000141552.18"/>
</dbReference>
<dbReference type="Ensembl" id="ENST00000579978.5">
    <molecule id="Q9NYG5-1"/>
    <property type="protein sequence ID" value="ENSP00000463640.1"/>
    <property type="gene ID" value="ENSG00000141552.18"/>
</dbReference>
<dbReference type="Ensembl" id="ENST00000583839.1">
    <molecule id="Q9NYG5-1"/>
    <property type="protein sequence ID" value="ENSP00000463598.1"/>
    <property type="gene ID" value="ENSG00000141552.18"/>
</dbReference>
<dbReference type="GeneID" id="51529"/>
<dbReference type="KEGG" id="hsa:51529"/>
<dbReference type="MANE-Select" id="ENST00000344877.10">
    <property type="protein sequence ID" value="ENSP00000339695.5"/>
    <property type="RefSeq nucleotide sequence ID" value="NM_001002248.3"/>
    <property type="RefSeq protein sequence ID" value="NP_001002248.1"/>
</dbReference>
<dbReference type="UCSC" id="uc002kbv.3">
    <molecule id="Q9NYG5-1"/>
    <property type="organism name" value="human"/>
</dbReference>
<dbReference type="AGR" id="HGNC:14452"/>
<dbReference type="CTD" id="51529"/>
<dbReference type="DisGeNET" id="51529"/>
<dbReference type="GeneCards" id="ANAPC11"/>
<dbReference type="HGNC" id="HGNC:14452">
    <property type="gene designation" value="ANAPC11"/>
</dbReference>
<dbReference type="HPA" id="ENSG00000141552">
    <property type="expression patterns" value="Low tissue specificity"/>
</dbReference>
<dbReference type="MIM" id="614534">
    <property type="type" value="gene"/>
</dbReference>
<dbReference type="neXtProt" id="NX_Q9NYG5"/>
<dbReference type="OpenTargets" id="ENSG00000141552"/>
<dbReference type="PharmGKB" id="PA24787"/>
<dbReference type="VEuPathDB" id="HostDB:ENSG00000141552"/>
<dbReference type="GeneTree" id="ENSGT00550000075186"/>
<dbReference type="HOGENOM" id="CLU_115512_0_2_1"/>
<dbReference type="InParanoid" id="Q9NYG5"/>
<dbReference type="OMA" id="QWRWDTG"/>
<dbReference type="OrthoDB" id="1681166at2759"/>
<dbReference type="PAN-GO" id="Q9NYG5">
    <property type="GO annotations" value="7 GO annotations based on evolutionary models"/>
</dbReference>
<dbReference type="PhylomeDB" id="Q9NYG5"/>
<dbReference type="TreeFam" id="TF354219"/>
<dbReference type="PathwayCommons" id="Q9NYG5"/>
<dbReference type="Reactome" id="R-HSA-141430">
    <property type="pathway name" value="Inactivation of APC/C via direct inhibition of the APC/C complex"/>
</dbReference>
<dbReference type="Reactome" id="R-HSA-174048">
    <property type="pathway name" value="APC/C:Cdc20 mediated degradation of Cyclin B"/>
</dbReference>
<dbReference type="Reactome" id="R-HSA-174084">
    <property type="pathway name" value="Autodegradation of Cdh1 by Cdh1:APC/C"/>
</dbReference>
<dbReference type="Reactome" id="R-HSA-174154">
    <property type="pathway name" value="APC/C:Cdc20 mediated degradation of Securin"/>
</dbReference>
<dbReference type="Reactome" id="R-HSA-174178">
    <property type="pathway name" value="APC/C:Cdh1 mediated degradation of Cdc20 and other APC/C:Cdh1 targeted proteins in late mitosis/early G1"/>
</dbReference>
<dbReference type="Reactome" id="R-HSA-174184">
    <property type="pathway name" value="Cdc20:Phospho-APC/C mediated degradation of Cyclin A"/>
</dbReference>
<dbReference type="Reactome" id="R-HSA-176407">
    <property type="pathway name" value="Conversion from APC/C:Cdc20 to APC/C:Cdh1 in late anaphase"/>
</dbReference>
<dbReference type="Reactome" id="R-HSA-176408">
    <property type="pathway name" value="Regulation of APC/C activators between G1/S and early anaphase"/>
</dbReference>
<dbReference type="Reactome" id="R-HSA-176409">
    <property type="pathway name" value="APC/C:Cdc20 mediated degradation of mitotic proteins"/>
</dbReference>
<dbReference type="Reactome" id="R-HSA-176412">
    <property type="pathway name" value="Phosphorylation of the APC/C"/>
</dbReference>
<dbReference type="Reactome" id="R-HSA-179409">
    <property type="pathway name" value="APC-Cdc20 mediated degradation of Nek2A"/>
</dbReference>
<dbReference type="Reactome" id="R-HSA-2467813">
    <property type="pathway name" value="Separation of Sister Chromatids"/>
</dbReference>
<dbReference type="Reactome" id="R-HSA-2559582">
    <property type="pathway name" value="Senescence-Associated Secretory Phenotype (SASP)"/>
</dbReference>
<dbReference type="Reactome" id="R-HSA-68867">
    <property type="pathway name" value="Assembly of the pre-replicative complex"/>
</dbReference>
<dbReference type="Reactome" id="R-HSA-69017">
    <property type="pathway name" value="CDK-mediated phosphorylation and removal of Cdc6"/>
</dbReference>
<dbReference type="Reactome" id="R-HSA-8853884">
    <property type="pathway name" value="Transcriptional Regulation by VENTX"/>
</dbReference>
<dbReference type="Reactome" id="R-HSA-9687136">
    <property type="pathway name" value="Aberrant regulation of mitotic exit in cancer due to RB1 defects"/>
</dbReference>
<dbReference type="Reactome" id="R-HSA-983168">
    <property type="pathway name" value="Antigen processing: Ubiquitination &amp; Proteasome degradation"/>
</dbReference>
<dbReference type="SignaLink" id="Q9NYG5"/>
<dbReference type="SIGNOR" id="Q9NYG5"/>
<dbReference type="UniPathway" id="UPA00143"/>
<dbReference type="BioGRID-ORCS" id="51529">
    <property type="hits" value="746 hits in 1212 CRISPR screens"/>
</dbReference>
<dbReference type="ChiTaRS" id="ANAPC11">
    <property type="organism name" value="human"/>
</dbReference>
<dbReference type="EvolutionaryTrace" id="Q9NYG5"/>
<dbReference type="GeneWiki" id="ANAPC11"/>
<dbReference type="GenomeRNAi" id="51529"/>
<dbReference type="Pharos" id="Q9NYG5">
    <property type="development level" value="Tbio"/>
</dbReference>
<dbReference type="PRO" id="PR:Q9NYG5"/>
<dbReference type="Proteomes" id="UP000005640">
    <property type="component" value="Chromosome 17"/>
</dbReference>
<dbReference type="RNAct" id="Q9NYG5">
    <property type="molecule type" value="protein"/>
</dbReference>
<dbReference type="Bgee" id="ENSG00000141552">
    <property type="expression patterns" value="Expressed in right testis and 101 other cell types or tissues"/>
</dbReference>
<dbReference type="ExpressionAtlas" id="Q9NYG5">
    <property type="expression patterns" value="baseline and differential"/>
</dbReference>
<dbReference type="GO" id="GO:0005680">
    <property type="term" value="C:anaphase-promoting complex"/>
    <property type="evidence" value="ECO:0000314"/>
    <property type="project" value="UniProtKB"/>
</dbReference>
<dbReference type="GO" id="GO:0005829">
    <property type="term" value="C:cytosol"/>
    <property type="evidence" value="ECO:0000304"/>
    <property type="project" value="Reactome"/>
</dbReference>
<dbReference type="GO" id="GO:0005730">
    <property type="term" value="C:nucleolus"/>
    <property type="evidence" value="ECO:0000314"/>
    <property type="project" value="HPA"/>
</dbReference>
<dbReference type="GO" id="GO:0005654">
    <property type="term" value="C:nucleoplasm"/>
    <property type="evidence" value="ECO:0000314"/>
    <property type="project" value="HPA"/>
</dbReference>
<dbReference type="GO" id="GO:0005634">
    <property type="term" value="C:nucleus"/>
    <property type="evidence" value="ECO:0000318"/>
    <property type="project" value="GO_Central"/>
</dbReference>
<dbReference type="GO" id="GO:0097602">
    <property type="term" value="F:cullin family protein binding"/>
    <property type="evidence" value="ECO:0000314"/>
    <property type="project" value="MGI"/>
</dbReference>
<dbReference type="GO" id="GO:0001664">
    <property type="term" value="F:G protein-coupled receptor binding"/>
    <property type="evidence" value="ECO:0007669"/>
    <property type="project" value="Ensembl"/>
</dbReference>
<dbReference type="GO" id="GO:0061630">
    <property type="term" value="F:ubiquitin protein ligase activity"/>
    <property type="evidence" value="ECO:0000314"/>
    <property type="project" value="MGI"/>
</dbReference>
<dbReference type="GO" id="GO:0034450">
    <property type="term" value="F:ubiquitin-ubiquitin ligase activity"/>
    <property type="evidence" value="ECO:0000314"/>
    <property type="project" value="MGI"/>
</dbReference>
<dbReference type="GO" id="GO:0008270">
    <property type="term" value="F:zinc ion binding"/>
    <property type="evidence" value="ECO:0007669"/>
    <property type="project" value="UniProtKB-KW"/>
</dbReference>
<dbReference type="GO" id="GO:0031145">
    <property type="term" value="P:anaphase-promoting complex-dependent catabolic process"/>
    <property type="evidence" value="ECO:0000314"/>
    <property type="project" value="UniProtKB"/>
</dbReference>
<dbReference type="GO" id="GO:0051301">
    <property type="term" value="P:cell division"/>
    <property type="evidence" value="ECO:0007669"/>
    <property type="project" value="UniProtKB-KW"/>
</dbReference>
<dbReference type="GO" id="GO:0000278">
    <property type="term" value="P:mitotic cell cycle"/>
    <property type="evidence" value="ECO:0000304"/>
    <property type="project" value="UniProtKB"/>
</dbReference>
<dbReference type="GO" id="GO:0045842">
    <property type="term" value="P:positive regulation of mitotic metaphase/anaphase transition"/>
    <property type="evidence" value="ECO:0000314"/>
    <property type="project" value="UniProt"/>
</dbReference>
<dbReference type="GO" id="GO:0141198">
    <property type="term" value="P:protein branched polyubiquitination"/>
    <property type="evidence" value="ECO:0000314"/>
    <property type="project" value="UniProtKB"/>
</dbReference>
<dbReference type="GO" id="GO:0070979">
    <property type="term" value="P:protein K11-linked ubiquitination"/>
    <property type="evidence" value="ECO:0000314"/>
    <property type="project" value="UniProtKB"/>
</dbReference>
<dbReference type="GO" id="GO:0070936">
    <property type="term" value="P:protein K48-linked ubiquitination"/>
    <property type="evidence" value="ECO:0000314"/>
    <property type="project" value="UniProtKB"/>
</dbReference>
<dbReference type="GO" id="GO:0016567">
    <property type="term" value="P:protein ubiquitination"/>
    <property type="evidence" value="ECO:0000314"/>
    <property type="project" value="UniProtKB"/>
</dbReference>
<dbReference type="GO" id="GO:0051445">
    <property type="term" value="P:regulation of meiotic cell cycle"/>
    <property type="evidence" value="ECO:0000303"/>
    <property type="project" value="ComplexPortal"/>
</dbReference>
<dbReference type="GO" id="GO:0007346">
    <property type="term" value="P:regulation of mitotic cell cycle"/>
    <property type="evidence" value="ECO:0000303"/>
    <property type="project" value="ComplexPortal"/>
</dbReference>
<dbReference type="GO" id="GO:0006511">
    <property type="term" value="P:ubiquitin-dependent protein catabolic process"/>
    <property type="evidence" value="ECO:0000318"/>
    <property type="project" value="GO_Central"/>
</dbReference>
<dbReference type="CDD" id="cd16456">
    <property type="entry name" value="RING-H2_APC11"/>
    <property type="match status" value="1"/>
</dbReference>
<dbReference type="FunFam" id="3.30.40.10:FF:000111">
    <property type="entry name" value="Anaphase-promoting complex subunit 11"/>
    <property type="match status" value="1"/>
</dbReference>
<dbReference type="Gene3D" id="3.30.40.10">
    <property type="entry name" value="Zinc/RING finger domain, C3HC4 (zinc finger)"/>
    <property type="match status" value="1"/>
</dbReference>
<dbReference type="InterPro" id="IPR051031">
    <property type="entry name" value="RING-box_E3_Ubiquitin_Ligase"/>
</dbReference>
<dbReference type="InterPro" id="IPR024991">
    <property type="entry name" value="RING-H2_APC11"/>
</dbReference>
<dbReference type="InterPro" id="IPR001841">
    <property type="entry name" value="Znf_RING"/>
</dbReference>
<dbReference type="InterPro" id="IPR013083">
    <property type="entry name" value="Znf_RING/FYVE/PHD"/>
</dbReference>
<dbReference type="PANTHER" id="PTHR11210">
    <property type="entry name" value="RING BOX"/>
    <property type="match status" value="1"/>
</dbReference>
<dbReference type="Pfam" id="PF12861">
    <property type="entry name" value="zf-ANAPC11"/>
    <property type="match status" value="1"/>
</dbReference>
<dbReference type="SUPFAM" id="SSF57850">
    <property type="entry name" value="RING/U-box"/>
    <property type="match status" value="1"/>
</dbReference>
<dbReference type="PROSITE" id="PS50089">
    <property type="entry name" value="ZF_RING_2"/>
    <property type="match status" value="1"/>
</dbReference>
<proteinExistence type="evidence at protein level"/>
<evidence type="ECO:0000250" key="1"/>
<evidence type="ECO:0000255" key="2">
    <source>
        <dbReference type="PROSITE-ProRule" id="PRU00175"/>
    </source>
</evidence>
<evidence type="ECO:0000269" key="3">
    <source>
    </source>
</evidence>
<evidence type="ECO:0000269" key="4">
    <source>
    </source>
</evidence>
<evidence type="ECO:0000269" key="5">
    <source>
    </source>
</evidence>
<evidence type="ECO:0000269" key="6">
    <source>
    </source>
</evidence>
<evidence type="ECO:0000269" key="7">
    <source>
    </source>
</evidence>
<evidence type="ECO:0000269" key="8">
    <source>
    </source>
</evidence>
<evidence type="ECO:0000269" key="9">
    <source>
    </source>
</evidence>
<evidence type="ECO:0000303" key="10">
    <source>
    </source>
</evidence>
<evidence type="ECO:0000305" key="11"/>
<evidence type="ECO:0007744" key="12">
    <source>
        <dbReference type="PDB" id="4UI9"/>
    </source>
</evidence>
<evidence type="ECO:0007744" key="13">
    <source>
        <dbReference type="PDB" id="5A31"/>
    </source>
</evidence>
<evidence type="ECO:0007829" key="14">
    <source>
        <dbReference type="PDB" id="2MT5"/>
    </source>
</evidence>
<evidence type="ECO:0007829" key="15">
    <source>
        <dbReference type="PDB" id="4R2Y"/>
    </source>
</evidence>
<evidence type="ECO:0007829" key="16">
    <source>
        <dbReference type="PDB" id="5G05"/>
    </source>
</evidence>
<evidence type="ECO:0007829" key="17">
    <source>
        <dbReference type="PDB" id="5JG6"/>
    </source>
</evidence>
<evidence type="ECO:0007829" key="18">
    <source>
        <dbReference type="PDB" id="6Q6G"/>
    </source>
</evidence>
<evidence type="ECO:0007829" key="19">
    <source>
        <dbReference type="PDB" id="9GAW"/>
    </source>
</evidence>
<organism>
    <name type="scientific">Homo sapiens</name>
    <name type="common">Human</name>
    <dbReference type="NCBI Taxonomy" id="9606"/>
    <lineage>
        <taxon>Eukaryota</taxon>
        <taxon>Metazoa</taxon>
        <taxon>Chordata</taxon>
        <taxon>Craniata</taxon>
        <taxon>Vertebrata</taxon>
        <taxon>Euteleostomi</taxon>
        <taxon>Mammalia</taxon>
        <taxon>Eutheria</taxon>
        <taxon>Euarchontoglires</taxon>
        <taxon>Primates</taxon>
        <taxon>Haplorrhini</taxon>
        <taxon>Catarrhini</taxon>
        <taxon>Hominidae</taxon>
        <taxon>Homo</taxon>
    </lineage>
</organism>